<gene>
    <name type="primary">ASA1</name>
    <name type="synonym">AMT1</name>
    <name type="synonym">JDL1</name>
    <name type="synonym">TRP5</name>
    <name type="synonym">WEI2</name>
    <name type="ordered locus">At5g05730</name>
    <name type="ORF">MJJ3.14</name>
</gene>
<protein>
    <recommendedName>
        <fullName evidence="10">Anthranilate synthase alpha subunit 1, chloroplastic</fullName>
        <ecNumber evidence="7">4.1.3.27</ecNumber>
    </recommendedName>
    <alternativeName>
        <fullName>Anthranilate synthase component 1-1</fullName>
    </alternativeName>
    <alternativeName>
        <fullName>Anthranilate synthase component I-1</fullName>
    </alternativeName>
    <alternativeName>
        <fullName>Protein A-METHYL TRYPTOPHAN RESISTANT 1</fullName>
    </alternativeName>
    <alternativeName>
        <fullName>Protein JASMONATE-INDUCED DEFECTIVE LATERAL ROOT 1</fullName>
    </alternativeName>
    <alternativeName>
        <fullName>Protein TRYPTOPHAN BIOSYNTHESIS 5</fullName>
    </alternativeName>
    <alternativeName>
        <fullName>Protein WEAK ETHYLENE INSENSITIVE 2</fullName>
    </alternativeName>
</protein>
<proteinExistence type="evidence at protein level"/>
<accession>P32068</accession>
<name>TRPE_ARATH</name>
<organism>
    <name type="scientific">Arabidopsis thaliana</name>
    <name type="common">Mouse-ear cress</name>
    <dbReference type="NCBI Taxonomy" id="3702"/>
    <lineage>
        <taxon>Eukaryota</taxon>
        <taxon>Viridiplantae</taxon>
        <taxon>Streptophyta</taxon>
        <taxon>Embryophyta</taxon>
        <taxon>Tracheophyta</taxon>
        <taxon>Spermatophyta</taxon>
        <taxon>Magnoliopsida</taxon>
        <taxon>eudicotyledons</taxon>
        <taxon>Gunneridae</taxon>
        <taxon>Pentapetalae</taxon>
        <taxon>rosids</taxon>
        <taxon>malvids</taxon>
        <taxon>Brassicales</taxon>
        <taxon>Brassicaceae</taxon>
        <taxon>Camelineae</taxon>
        <taxon>Arabidopsis</taxon>
    </lineage>
</organism>
<evidence type="ECO:0000250" key="1"/>
<evidence type="ECO:0000250" key="2">
    <source>
        <dbReference type="UniProtKB" id="P00897"/>
    </source>
</evidence>
<evidence type="ECO:0000269" key="3">
    <source>
    </source>
</evidence>
<evidence type="ECO:0000269" key="4">
    <source>
    </source>
</evidence>
<evidence type="ECO:0000269" key="5">
    <source>
    </source>
</evidence>
<evidence type="ECO:0000269" key="6">
    <source>
    </source>
</evidence>
<evidence type="ECO:0000269" key="7">
    <source>
    </source>
</evidence>
<evidence type="ECO:0000269" key="8">
    <source>
    </source>
</evidence>
<evidence type="ECO:0000269" key="9">
    <source>
    </source>
</evidence>
<evidence type="ECO:0000303" key="10">
    <source>
    </source>
</evidence>
<evidence type="ECO:0000305" key="11"/>
<evidence type="ECO:0007744" key="12">
    <source>
    </source>
</evidence>
<dbReference type="EC" id="4.1.3.27" evidence="7"/>
<dbReference type="EMBL" id="M92353">
    <property type="protein sequence ID" value="AAA32738.1"/>
    <property type="molecule type" value="Genomic_DNA"/>
</dbReference>
<dbReference type="EMBL" id="AB005237">
    <property type="protein sequence ID" value="BAB09667.1"/>
    <property type="molecule type" value="Genomic_DNA"/>
</dbReference>
<dbReference type="EMBL" id="CP002688">
    <property type="protein sequence ID" value="AED90915.1"/>
    <property type="molecule type" value="Genomic_DNA"/>
</dbReference>
<dbReference type="EMBL" id="AY072013">
    <property type="status" value="NOT_ANNOTATED_CDS"/>
    <property type="molecule type" value="mRNA"/>
</dbReference>
<dbReference type="PIR" id="JQ1684">
    <property type="entry name" value="JQ1684"/>
</dbReference>
<dbReference type="RefSeq" id="NP_196192.1">
    <molecule id="P32068-1"/>
    <property type="nucleotide sequence ID" value="NM_120655.4"/>
</dbReference>
<dbReference type="SMR" id="P32068"/>
<dbReference type="BioGRID" id="15736">
    <property type="interactions" value="3"/>
</dbReference>
<dbReference type="FunCoup" id="P32068">
    <property type="interactions" value="610"/>
</dbReference>
<dbReference type="IntAct" id="P32068">
    <property type="interactions" value="2"/>
</dbReference>
<dbReference type="STRING" id="3702.P32068"/>
<dbReference type="iPTMnet" id="P32068"/>
<dbReference type="MetOSite" id="P32068"/>
<dbReference type="PaxDb" id="3702-AT5G05730.2"/>
<dbReference type="ProteomicsDB" id="232379">
    <molecule id="P32068-1"/>
</dbReference>
<dbReference type="EnsemblPlants" id="AT5G05730.1">
    <molecule id="P32068-1"/>
    <property type="protein sequence ID" value="AT5G05730.1"/>
    <property type="gene ID" value="AT5G05730"/>
</dbReference>
<dbReference type="GeneID" id="830457"/>
<dbReference type="Gramene" id="AT5G05730.1">
    <molecule id="P32068-1"/>
    <property type="protein sequence ID" value="AT5G05730.1"/>
    <property type="gene ID" value="AT5G05730"/>
</dbReference>
<dbReference type="KEGG" id="ath:AT5G05730"/>
<dbReference type="Araport" id="AT5G05730"/>
<dbReference type="TAIR" id="AT5G05730">
    <property type="gene designation" value="ASA1"/>
</dbReference>
<dbReference type="eggNOG" id="KOG1223">
    <property type="taxonomic scope" value="Eukaryota"/>
</dbReference>
<dbReference type="HOGENOM" id="CLU_006493_9_3_1"/>
<dbReference type="InParanoid" id="P32068"/>
<dbReference type="PhylomeDB" id="P32068"/>
<dbReference type="BioCyc" id="ARA:AT5G05730-MONOMER"/>
<dbReference type="SABIO-RK" id="P32068"/>
<dbReference type="UniPathway" id="UPA00035">
    <property type="reaction ID" value="UER00040"/>
</dbReference>
<dbReference type="PRO" id="PR:P32068"/>
<dbReference type="Proteomes" id="UP000006548">
    <property type="component" value="Chromosome 5"/>
</dbReference>
<dbReference type="ExpressionAtlas" id="P32068">
    <property type="expression patterns" value="baseline and differential"/>
</dbReference>
<dbReference type="GO" id="GO:0009507">
    <property type="term" value="C:chloroplast"/>
    <property type="evidence" value="ECO:0007669"/>
    <property type="project" value="UniProtKB-SubCell"/>
</dbReference>
<dbReference type="GO" id="GO:0004049">
    <property type="term" value="F:anthranilate synthase activity"/>
    <property type="evidence" value="ECO:0000314"/>
    <property type="project" value="UniProtKB"/>
</dbReference>
<dbReference type="GO" id="GO:0046872">
    <property type="term" value="F:metal ion binding"/>
    <property type="evidence" value="ECO:0007669"/>
    <property type="project" value="UniProtKB-KW"/>
</dbReference>
<dbReference type="GO" id="GO:0000162">
    <property type="term" value="P:L-tryptophan biosynthetic process"/>
    <property type="evidence" value="ECO:0000315"/>
    <property type="project" value="UniProtKB"/>
</dbReference>
<dbReference type="GO" id="GO:0010600">
    <property type="term" value="P:regulation of auxin biosynthetic process"/>
    <property type="evidence" value="ECO:0000315"/>
    <property type="project" value="UniProtKB"/>
</dbReference>
<dbReference type="FunFam" id="3.60.120.10:FF:000003">
    <property type="entry name" value="Anthranilate synthase component 1"/>
    <property type="match status" value="1"/>
</dbReference>
<dbReference type="Gene3D" id="3.60.120.10">
    <property type="entry name" value="Anthranilate synthase"/>
    <property type="match status" value="1"/>
</dbReference>
<dbReference type="InterPro" id="IPR005801">
    <property type="entry name" value="ADC_synthase"/>
</dbReference>
<dbReference type="InterPro" id="IPR019999">
    <property type="entry name" value="Anth_synth_I-like"/>
</dbReference>
<dbReference type="InterPro" id="IPR006805">
    <property type="entry name" value="Anth_synth_I_N"/>
</dbReference>
<dbReference type="InterPro" id="IPR005256">
    <property type="entry name" value="Anth_synth_I_PabB"/>
</dbReference>
<dbReference type="InterPro" id="IPR015890">
    <property type="entry name" value="Chorismate_C"/>
</dbReference>
<dbReference type="NCBIfam" id="TIGR00564">
    <property type="entry name" value="trpE_most"/>
    <property type="match status" value="1"/>
</dbReference>
<dbReference type="PANTHER" id="PTHR11236">
    <property type="entry name" value="AMINOBENZOATE/ANTHRANILATE SYNTHASE"/>
    <property type="match status" value="1"/>
</dbReference>
<dbReference type="PANTHER" id="PTHR11236:SF33">
    <property type="entry name" value="ANTHRANILATE SYNTHASE ALPHA SUBUNIT 1, CHLOROPLASTIC-RELATED"/>
    <property type="match status" value="1"/>
</dbReference>
<dbReference type="Pfam" id="PF04715">
    <property type="entry name" value="Anth_synt_I_N"/>
    <property type="match status" value="1"/>
</dbReference>
<dbReference type="Pfam" id="PF00425">
    <property type="entry name" value="Chorismate_bind"/>
    <property type="match status" value="1"/>
</dbReference>
<dbReference type="PRINTS" id="PR00095">
    <property type="entry name" value="ANTSNTHASEI"/>
</dbReference>
<dbReference type="SUPFAM" id="SSF56322">
    <property type="entry name" value="ADC synthase"/>
    <property type="match status" value="1"/>
</dbReference>
<sequence>MSSSMNVATMQALTFSRRLLPSVASRYLSSSSVTVTGYSGRSSAYAPSFRSIKCVSVSPEASIVSDTKKLADASKSTNLIPIYRCIFSDQLTPVLAYRCLVKEDDREAPSFLFESVEPGSQMSSVGRYSVVGAQPAMEIVAKENKVIVMDHNNETMTEEFVEDPMEIPRKISEKWNPDPQLVQDLPDAFCGGWVGFFSYDTVRYVEKRKLPFSKAPEDDRNLPDMHLGLYDDVVVFDHVEKKAYVIHWIRLDGSLPYEKAYSNGMQHLENLVAKLHDIEPPKLAAGNVNLQTRQFGPSLDNSNVTCEEYKEAVVKAKEHILAGDIFQIVLSQRFERRTFADPFEVYRALRVVNPSPYMGYLQARGCILVASSPEILTKVKQNKIVNRPLAGTSKRGKNEVEDKRLEKELLENEKQCAEHIMLVDLGRNDVGKVTKYGSVKVEKLMNIERYSHVMHISSTVTGELQDGLTCWDVLRAALPVGTVSGAPKVKAMELIDELEPTRRGPYSGGFGGVSFTGDMDIALSLRTIVFPTACQYNTMYSYKDANKRREWVAYLQAGAGVVADSDPQDEHCECQNKAAGLARAIDLAESAFVKK</sequence>
<keyword id="KW-0007">Acetylation</keyword>
<keyword id="KW-0025">Alternative splicing</keyword>
<keyword id="KW-0028">Amino-acid biosynthesis</keyword>
<keyword id="KW-0057">Aromatic amino acid biosynthesis</keyword>
<keyword id="KW-0150">Chloroplast</keyword>
<keyword id="KW-0456">Lyase</keyword>
<keyword id="KW-0460">Magnesium</keyword>
<keyword id="KW-0479">Metal-binding</keyword>
<keyword id="KW-0934">Plastid</keyword>
<keyword id="KW-1185">Reference proteome</keyword>
<keyword id="KW-0809">Transit peptide</keyword>
<keyword id="KW-0822">Tryptophan biosynthesis</keyword>
<reference key="1">
    <citation type="journal article" date="1992" name="Plant Cell">
        <title>Two anthranilate synthase genes in Arabidopsis: defense-related regulation of the tryptophan pathway.</title>
        <authorList>
            <person name="Niyogi K.K."/>
            <person name="Fink G.R."/>
        </authorList>
    </citation>
    <scope>NUCLEOTIDE SEQUENCE [GENOMIC DNA]</scope>
    <scope>INDUCTION</scope>
</reference>
<reference key="2">
    <citation type="journal article" date="1997" name="DNA Res.">
        <title>Structural analysis of Arabidopsis thaliana chromosome 5. I. Sequence features of the 1.6 Mb regions covered by twenty physically assigned P1 clones.</title>
        <authorList>
            <person name="Sato S."/>
            <person name="Kotani H."/>
            <person name="Nakamura Y."/>
            <person name="Kaneko T."/>
            <person name="Asamizu E."/>
            <person name="Fukami M."/>
            <person name="Miyajima N."/>
            <person name="Tabata S."/>
        </authorList>
    </citation>
    <scope>NUCLEOTIDE SEQUENCE [LARGE SCALE GENOMIC DNA]</scope>
    <source>
        <strain>cv. Columbia</strain>
    </source>
</reference>
<reference key="3">
    <citation type="journal article" date="2017" name="Plant J.">
        <title>Araport11: a complete reannotation of the Arabidopsis thaliana reference genome.</title>
        <authorList>
            <person name="Cheng C.Y."/>
            <person name="Krishnakumar V."/>
            <person name="Chan A.P."/>
            <person name="Thibaud-Nissen F."/>
            <person name="Schobel S."/>
            <person name="Town C.D."/>
        </authorList>
    </citation>
    <scope>GENOME REANNOTATION</scope>
    <source>
        <strain>cv. Columbia</strain>
    </source>
</reference>
<reference key="4">
    <citation type="journal article" date="2003" name="Science">
        <title>Empirical analysis of transcriptional activity in the Arabidopsis genome.</title>
        <authorList>
            <person name="Yamada K."/>
            <person name="Lim J."/>
            <person name="Dale J.M."/>
            <person name="Chen H."/>
            <person name="Shinn P."/>
            <person name="Palm C.J."/>
            <person name="Southwick A.M."/>
            <person name="Wu H.C."/>
            <person name="Kim C.J."/>
            <person name="Nguyen M."/>
            <person name="Pham P.K."/>
            <person name="Cheuk R.F."/>
            <person name="Karlin-Newmann G."/>
            <person name="Liu S.X."/>
            <person name="Lam B."/>
            <person name="Sakano H."/>
            <person name="Wu T."/>
            <person name="Yu G."/>
            <person name="Miranda M."/>
            <person name="Quach H.L."/>
            <person name="Tripp M."/>
            <person name="Chang C.H."/>
            <person name="Lee J.M."/>
            <person name="Toriumi M.J."/>
            <person name="Chan M.M."/>
            <person name="Tang C.C."/>
            <person name="Onodera C.S."/>
            <person name="Deng J.M."/>
            <person name="Akiyama K."/>
            <person name="Ansari Y."/>
            <person name="Arakawa T."/>
            <person name="Banh J."/>
            <person name="Banno F."/>
            <person name="Bowser L."/>
            <person name="Brooks S.Y."/>
            <person name="Carninci P."/>
            <person name="Chao Q."/>
            <person name="Choy N."/>
            <person name="Enju A."/>
            <person name="Goldsmith A.D."/>
            <person name="Gurjal M."/>
            <person name="Hansen N.F."/>
            <person name="Hayashizaki Y."/>
            <person name="Johnson-Hopson C."/>
            <person name="Hsuan V.W."/>
            <person name="Iida K."/>
            <person name="Karnes M."/>
            <person name="Khan S."/>
            <person name="Koesema E."/>
            <person name="Ishida J."/>
            <person name="Jiang P.X."/>
            <person name="Jones T."/>
            <person name="Kawai J."/>
            <person name="Kamiya A."/>
            <person name="Meyers C."/>
            <person name="Nakajima M."/>
            <person name="Narusaka M."/>
            <person name="Seki M."/>
            <person name="Sakurai T."/>
            <person name="Satou M."/>
            <person name="Tamse R."/>
            <person name="Vaysberg M."/>
            <person name="Wallender E.K."/>
            <person name="Wong C."/>
            <person name="Yamamura Y."/>
            <person name="Yuan S."/>
            <person name="Shinozaki K."/>
            <person name="Davis R.W."/>
            <person name="Theologis A."/>
            <person name="Ecker J.R."/>
        </authorList>
    </citation>
    <scope>NUCLEOTIDE SEQUENCE [LARGE SCALE MRNA]</scope>
    <source>
        <strain>cv. Columbia</strain>
    </source>
</reference>
<reference key="5">
    <citation type="journal article" date="1994" name="Plant Physiol.">
        <title>Functional expression of Arabidopsis thaliana anthranilate synthase subunit I in Escherichia coli.</title>
        <authorList>
            <person name="Bernasconi P."/>
            <person name="Walters E.W."/>
            <person name="Woodworth A.R."/>
            <person name="Siehl D.L."/>
            <person name="Stone T.E."/>
            <person name="Subramanian M.V."/>
        </authorList>
    </citation>
    <scope>FUNCTION</scope>
    <scope>CATALYTIC ACTIVITY</scope>
    <scope>BIOPHYSICOCHEMICAL PROPERTIES</scope>
    <scope>PATHWAY</scope>
</reference>
<reference key="6">
    <citation type="journal article" date="1996" name="Plant Physiol.">
        <title>The Arabidopsis thaliana trp5 mutant has a feedback-resistant anthranilate synthase and elevated soluble tryptophan.</title>
        <authorList>
            <person name="Li J."/>
            <person name="Last R.L."/>
        </authorList>
    </citation>
    <scope>FUNCTION</scope>
    <scope>ACTIVITY REGULATION</scope>
    <scope>MUTAGENESIS OF ASP-341</scope>
    <scope>DISRUPTION PHENOTYPE</scope>
</reference>
<reference key="7">
    <citation type="journal article" date="1996" name="Plant Physiol.">
        <title>Molecular basis of alpha-methyltryptophan resistance in amt-1, a mutant of Arabidopsis thaliana with altered tryptophan metabolism.</title>
        <authorList>
            <person name="Kreps J.A."/>
            <person name="Ponappa T."/>
            <person name="Dong W."/>
            <person name="Town C.D."/>
        </authorList>
    </citation>
    <scope>FUNCTION</scope>
    <scope>DISRUPTION PHENOTYPE</scope>
</reference>
<reference key="8">
    <citation type="journal article" date="2005" name="Plant Cell">
        <title>A link between ethylene and auxin uncovered by the characterization of two root-specific ethylene-insensitive mutants in Arabidopsis.</title>
        <authorList>
            <person name="Stepanova A.N."/>
            <person name="Hoyt J.M."/>
            <person name="Hamilton A.A."/>
            <person name="Alonso J.M."/>
        </authorList>
    </citation>
    <scope>FUNCTION</scope>
    <scope>INDUCTION BY ETHYLENE</scope>
    <scope>DISRUPTION PHENOTYPE</scope>
</reference>
<reference key="9">
    <citation type="journal article" date="2008" name="Plant J.">
        <title>Ethylene-auxin interactions regulate lateral root initiation and emergence in Arabidopsis thaliana.</title>
        <authorList>
            <person name="Ivanchenko M.G."/>
            <person name="Muday G.K."/>
            <person name="Dubrovsky J.G."/>
        </authorList>
    </citation>
    <scope>TISSUE SPECIFICITY</scope>
</reference>
<reference key="10">
    <citation type="journal article" date="2009" name="Plant Cell">
        <title>Arabidopsis ASA1 is important for jasmonate-mediated regulation of auxin biosynthesis and transport during lateral root formation.</title>
        <authorList>
            <person name="Sun J."/>
            <person name="Xu Y."/>
            <person name="Ye S."/>
            <person name="Jiang H."/>
            <person name="Chen Q."/>
            <person name="Liu F."/>
            <person name="Zhou W."/>
            <person name="Chen R."/>
            <person name="Li X."/>
            <person name="Tietz O."/>
            <person name="Wu X."/>
            <person name="Cohen J.D."/>
            <person name="Palme K."/>
            <person name="Li C."/>
        </authorList>
    </citation>
    <scope>FUNCTION</scope>
    <scope>INDUCTION BY METHYL JASMONATE</scope>
    <scope>DISRUPTION PHENOTYPE</scope>
</reference>
<reference key="11">
    <citation type="journal article" date="2012" name="Mol. Cell. Proteomics">
        <title>Comparative large-scale characterisation of plant vs. mammal proteins reveals similar and idiosyncratic N-alpha acetylation features.</title>
        <authorList>
            <person name="Bienvenut W.V."/>
            <person name="Sumpton D."/>
            <person name="Martinez A."/>
            <person name="Lilla S."/>
            <person name="Espagne C."/>
            <person name="Meinnel T."/>
            <person name="Giglione C."/>
        </authorList>
    </citation>
    <scope>ACETYLATION [LARGE SCALE ANALYSIS] AT VAL-55</scope>
    <scope>CLEAVAGE OF TRANSIT PEPTIDE [LARGE SCALE ANALYSIS] AFTER CYS-54</scope>
    <scope>IDENTIFICATION BY MASS SPECTROMETRY [LARGE SCALE ANALYSIS]</scope>
</reference>
<feature type="transit peptide" description="Chloroplast" evidence="12">
    <location>
        <begin position="1"/>
        <end position="54"/>
    </location>
</feature>
<feature type="chain" id="PRO_0000035789" description="Anthranilate synthase alpha subunit 1, chloroplastic">
    <location>
        <begin position="55"/>
        <end position="595"/>
    </location>
</feature>
<feature type="binding site" evidence="2">
    <location>
        <position position="115"/>
    </location>
    <ligand>
        <name>L-tryptophan</name>
        <dbReference type="ChEBI" id="CHEBI:57912"/>
    </ligand>
</feature>
<feature type="binding site" evidence="2">
    <location>
        <begin position="356"/>
        <end position="358"/>
    </location>
    <ligand>
        <name>L-tryptophan</name>
        <dbReference type="ChEBI" id="CHEBI:57912"/>
    </ligand>
</feature>
<feature type="binding site" evidence="2">
    <location>
        <begin position="391"/>
        <end position="392"/>
    </location>
    <ligand>
        <name>chorismate</name>
        <dbReference type="ChEBI" id="CHEBI:29748"/>
    </ligand>
</feature>
<feature type="binding site" evidence="2">
    <location>
        <position position="418"/>
    </location>
    <ligand>
        <name>Mg(2+)</name>
        <dbReference type="ChEBI" id="CHEBI:18420"/>
    </ligand>
</feature>
<feature type="binding site" evidence="2">
    <location>
        <position position="506"/>
    </location>
    <ligand>
        <name>chorismate</name>
        <dbReference type="ChEBI" id="CHEBI:29748"/>
    </ligand>
</feature>
<feature type="binding site" evidence="2">
    <location>
        <position position="526"/>
    </location>
    <ligand>
        <name>chorismate</name>
        <dbReference type="ChEBI" id="CHEBI:29748"/>
    </ligand>
</feature>
<feature type="binding site" evidence="2">
    <location>
        <begin position="558"/>
        <end position="560"/>
    </location>
    <ligand>
        <name>chorismate</name>
        <dbReference type="ChEBI" id="CHEBI:29748"/>
    </ligand>
</feature>
<feature type="binding site" evidence="2">
    <location>
        <position position="560"/>
    </location>
    <ligand>
        <name>chorismate</name>
        <dbReference type="ChEBI" id="CHEBI:29748"/>
    </ligand>
</feature>
<feature type="binding site" evidence="2">
    <location>
        <position position="573"/>
    </location>
    <ligand>
        <name>Mg(2+)</name>
        <dbReference type="ChEBI" id="CHEBI:18420"/>
    </ligand>
</feature>
<feature type="modified residue" description="N-acetylvaline" evidence="12">
    <location>
        <position position="55"/>
    </location>
</feature>
<feature type="mutagenesis site" description="In trp5-1; insensitive to feedback inhibition by tryptophan and resistance to the herbicide 6-methylanthranilate." evidence="8">
    <original>D</original>
    <variation>N</variation>
    <location>
        <position position="341"/>
    </location>
</feature>
<feature type="sequence conflict" description="In Ref. 4; AY072013." evidence="11" ref="4">
    <original>P</original>
    <variation>R</variation>
    <location>
        <position position="59"/>
    </location>
</feature>
<feature type="sequence conflict" description="In Ref. 4; AY072013." evidence="11" ref="4">
    <original>QMS</original>
    <variation>LLA</variation>
    <location>
        <begin position="121"/>
        <end position="123"/>
    </location>
</feature>
<comment type="function">
    <text evidence="4 6 7 8 9">Part of a heterotetrameric complex that catalyzes the two-step biosynthesis of anthranilate, an intermediate in the biosynthesis of L-tryptophan. In the first step, the glutamine-binding beta subunit of anthranilate synthase (AS) provides the glutamine amidotransferase activity which generates ammonia as a substrate that, along with chorismate, is used in the second step, catalyzed by the large alpha subunit of AS to produce anthranilate. Plays an important regulatory role in auxin production via the tryptophan-dependent biosynthetic pathway.</text>
</comment>
<comment type="catalytic activity">
    <reaction evidence="7">
        <text>chorismate + L-glutamine = anthranilate + pyruvate + L-glutamate + H(+)</text>
        <dbReference type="Rhea" id="RHEA:21732"/>
        <dbReference type="ChEBI" id="CHEBI:15361"/>
        <dbReference type="ChEBI" id="CHEBI:15378"/>
        <dbReference type="ChEBI" id="CHEBI:16567"/>
        <dbReference type="ChEBI" id="CHEBI:29748"/>
        <dbReference type="ChEBI" id="CHEBI:29985"/>
        <dbReference type="ChEBI" id="CHEBI:58359"/>
        <dbReference type="EC" id="4.1.3.27"/>
    </reaction>
    <physiologicalReaction direction="right-to-left" evidence="7">
        <dbReference type="Rhea" id="RHEA:21734"/>
    </physiologicalReaction>
</comment>
<comment type="cofactor">
    <cofactor evidence="2">
        <name>Mg(2+)</name>
        <dbReference type="ChEBI" id="CHEBI:18420"/>
    </cofactor>
    <text evidence="2">Binds 1 Mg(2+) ion per subunit.</text>
</comment>
<comment type="activity regulation">
    <text evidence="8">Feedback inhibition by tryptophan.</text>
</comment>
<comment type="biophysicochemical properties">
    <kinetics>
        <KM evidence="7">180 uM for chorismate</KM>
        <Vmax evidence="7">45.0 nmol/min/mg enzyme toward chorismate</Vmax>
    </kinetics>
</comment>
<comment type="pathway">
    <text evidence="7">Amino-acid biosynthesis; L-tryptophan biosynthesis; L-tryptophan from chorismate: step 1/5.</text>
</comment>
<comment type="subunit">
    <text evidence="1">Heterotetramer consisting of two non-identical subunits: a beta subunit and a large alpha subunit.</text>
</comment>
<comment type="interaction">
    <interactant intactId="EBI-25514634">
        <id>P32068</id>
    </interactant>
    <interactant intactId="EBI-617095">
        <id>Q9LEZ3</id>
        <label>BIM1</label>
    </interactant>
    <organismsDiffer>false</organismsDiffer>
    <experiments>3</experiments>
</comment>
<comment type="interaction">
    <interactant intactId="EBI-25514634">
        <id>P32068</id>
    </interactant>
    <interactant intactId="EBI-2312231">
        <id>Q9C5K8</id>
        <label>TIFY3B</label>
    </interactant>
    <organismsDiffer>false</organismsDiffer>
    <experiments>3</experiments>
</comment>
<comment type="subcellular location">
    <subcellularLocation>
        <location evidence="11">Plastid</location>
        <location evidence="11">Chloroplast</location>
    </subcellularLocation>
</comment>
<comment type="alternative products">
    <event type="alternative splicing"/>
    <isoform>
        <id>P32068-1</id>
        <name>1</name>
        <sequence type="displayed"/>
    </isoform>
    <text>A number of isoforms are produced. According to EST sequences.</text>
</comment>
<comment type="tissue specificity">
    <text evidence="5">Expressed in the central cylinder of mature primary root zones, including pericycle and early lateral root primordia, and vasculature of cotyledons.</text>
</comment>
<comment type="induction">
    <text evidence="3 4 6">By ethylene, methyl jasmonate (MeJa), wounding and infection by a virulent strain of P.syringae pv maculicola.</text>
</comment>
<comment type="disruption phenotype">
    <text evidence="4 6 8 9">No visible phenotype under normal growth conditions, but mutant plants are insensitive to inhibition of root elongation by ethylene, resistant to the herbicide and anthranilate analog 6-methylanthranilate, resistant to growth inhibition by the tryptophan analog alpha-methyltryptophan and insensitive to feedback inhibition by tryptophan.</text>
</comment>
<comment type="similarity">
    <text evidence="11">Belongs to the anthranilate synthase component I family.</text>
</comment>
<comment type="sequence caution" evidence="11">
    <conflict type="frameshift">
        <sequence resource="EMBL" id="AY072013"/>
    </conflict>
</comment>